<proteinExistence type="inferred from homology"/>
<reference key="1">
    <citation type="submission" date="2007-06" db="EMBL/GenBank/DDBJ databases">
        <authorList>
            <person name="Brinkac L.M."/>
            <person name="Daugherty S."/>
            <person name="Dodson R.J."/>
            <person name="Madupu R."/>
            <person name="Brown J.L."/>
            <person name="Bruce D."/>
            <person name="Detter C."/>
            <person name="Munk C."/>
            <person name="Smith L.A."/>
            <person name="Smith T.J."/>
            <person name="White O."/>
            <person name="Brettin T.S."/>
        </authorList>
    </citation>
    <scope>NUCLEOTIDE SEQUENCE [LARGE SCALE GENOMIC DNA]</scope>
    <source>
        <strain>Langeland / NCTC 10281 / Type F</strain>
    </source>
</reference>
<accession>A7GCK7</accession>
<dbReference type="EC" id="4.2.1.70" evidence="1"/>
<dbReference type="EMBL" id="CP000728">
    <property type="protein sequence ID" value="ABS42209.1"/>
    <property type="molecule type" value="Genomic_DNA"/>
</dbReference>
<dbReference type="RefSeq" id="WP_003487170.1">
    <property type="nucleotide sequence ID" value="NC_009699.1"/>
</dbReference>
<dbReference type="SMR" id="A7GCK7"/>
<dbReference type="KEGG" id="cbf:CLI_1251"/>
<dbReference type="HOGENOM" id="CLU_012201_0_1_9"/>
<dbReference type="Proteomes" id="UP000002410">
    <property type="component" value="Chromosome"/>
</dbReference>
<dbReference type="GO" id="GO:0005737">
    <property type="term" value="C:cytoplasm"/>
    <property type="evidence" value="ECO:0007669"/>
    <property type="project" value="TreeGrafter"/>
</dbReference>
<dbReference type="GO" id="GO:0016798">
    <property type="term" value="F:hydrolase activity, acting on glycosyl bonds"/>
    <property type="evidence" value="ECO:0007669"/>
    <property type="project" value="UniProtKB-KW"/>
</dbReference>
<dbReference type="GO" id="GO:0046872">
    <property type="term" value="F:metal ion binding"/>
    <property type="evidence" value="ECO:0007669"/>
    <property type="project" value="UniProtKB-KW"/>
</dbReference>
<dbReference type="GO" id="GO:0004730">
    <property type="term" value="F:pseudouridylate synthase activity"/>
    <property type="evidence" value="ECO:0007669"/>
    <property type="project" value="UniProtKB-UniRule"/>
</dbReference>
<dbReference type="GO" id="GO:0046113">
    <property type="term" value="P:nucleobase catabolic process"/>
    <property type="evidence" value="ECO:0007669"/>
    <property type="project" value="UniProtKB-UniRule"/>
</dbReference>
<dbReference type="FunFam" id="3.40.1790.10:FF:000001">
    <property type="entry name" value="Indigoidine synthase A family protein"/>
    <property type="match status" value="1"/>
</dbReference>
<dbReference type="Gene3D" id="3.40.1790.10">
    <property type="entry name" value="Indigoidine synthase domain"/>
    <property type="match status" value="1"/>
</dbReference>
<dbReference type="HAMAP" id="MF_01876">
    <property type="entry name" value="PsiMP_glycosidase"/>
    <property type="match status" value="1"/>
</dbReference>
<dbReference type="InterPro" id="IPR022830">
    <property type="entry name" value="Indigdn_synthA-like"/>
</dbReference>
<dbReference type="InterPro" id="IPR007342">
    <property type="entry name" value="PsuG"/>
</dbReference>
<dbReference type="PANTHER" id="PTHR42909:SF1">
    <property type="entry name" value="CARBOHYDRATE KINASE PFKB DOMAIN-CONTAINING PROTEIN"/>
    <property type="match status" value="1"/>
</dbReference>
<dbReference type="PANTHER" id="PTHR42909">
    <property type="entry name" value="ZGC:136858"/>
    <property type="match status" value="1"/>
</dbReference>
<dbReference type="Pfam" id="PF04227">
    <property type="entry name" value="Indigoidine_A"/>
    <property type="match status" value="1"/>
</dbReference>
<dbReference type="SUPFAM" id="SSF110581">
    <property type="entry name" value="Indigoidine synthase A-like"/>
    <property type="match status" value="1"/>
</dbReference>
<keyword id="KW-0326">Glycosidase</keyword>
<keyword id="KW-0378">Hydrolase</keyword>
<keyword id="KW-0456">Lyase</keyword>
<keyword id="KW-0464">Manganese</keyword>
<keyword id="KW-0479">Metal-binding</keyword>
<feature type="chain" id="PRO_0000390512" description="Pseudouridine-5'-phosphate glycosidase">
    <location>
        <begin position="1"/>
        <end position="307"/>
    </location>
</feature>
<feature type="active site" description="Proton donor" evidence="1">
    <location>
        <position position="26"/>
    </location>
</feature>
<feature type="active site" description="Nucleophile" evidence="1">
    <location>
        <position position="161"/>
    </location>
</feature>
<feature type="binding site" evidence="1">
    <location>
        <position position="88"/>
    </location>
    <ligand>
        <name>substrate</name>
    </ligand>
</feature>
<feature type="binding site" evidence="1">
    <location>
        <position position="108"/>
    </location>
    <ligand>
        <name>substrate</name>
    </ligand>
</feature>
<feature type="binding site" evidence="1">
    <location>
        <position position="140"/>
    </location>
    <ligand>
        <name>Mn(2+)</name>
        <dbReference type="ChEBI" id="CHEBI:29035"/>
    </ligand>
</feature>
<feature type="binding site" evidence="1">
    <location>
        <begin position="142"/>
        <end position="144"/>
    </location>
    <ligand>
        <name>substrate</name>
    </ligand>
</feature>
<protein>
    <recommendedName>
        <fullName evidence="1">Pseudouridine-5'-phosphate glycosidase</fullName>
        <shortName evidence="1">PsiMP glycosidase</shortName>
        <ecNumber evidence="1">4.2.1.70</ecNumber>
    </recommendedName>
</protein>
<name>PSUG_CLOBL</name>
<gene>
    <name evidence="1" type="primary">psuG</name>
    <name type="ordered locus">CLI_1251</name>
</gene>
<sequence>MLEKYLEISKEVSEALKENKPVVALESTIISHGMPYPKNAETALNVEKIIRDKGAIPATIAILNGKLKVGLTKDEIEYLGKKGKEVVKTSRRDIPFILAKKLDGATTVASTMIVANLAGIKVFGTGGIGGVHRGAQESFDISADLQELANTNVAVVCAGAKSILDIGLTLEYLETQGVPVVGFGTEELPAFYTRKSGFKVDYRVDTAKELAEALKAKWDLGLKGGMVVGNPIPEEYQMDYDTITKAINDAVKEAEEKGIKGKESTPFLLAKVKDITKGKSLEANIQLVYNNVAVASDLAIELSKLNK</sequence>
<organism>
    <name type="scientific">Clostridium botulinum (strain Langeland / NCTC 10281 / Type F)</name>
    <dbReference type="NCBI Taxonomy" id="441772"/>
    <lineage>
        <taxon>Bacteria</taxon>
        <taxon>Bacillati</taxon>
        <taxon>Bacillota</taxon>
        <taxon>Clostridia</taxon>
        <taxon>Eubacteriales</taxon>
        <taxon>Clostridiaceae</taxon>
        <taxon>Clostridium</taxon>
    </lineage>
</organism>
<comment type="function">
    <text evidence="1">Catalyzes the reversible cleavage of pseudouridine 5'-phosphate (PsiMP) to ribose 5-phosphate and uracil. Functions biologically in the cleavage direction, as part of a pseudouridine degradation pathway.</text>
</comment>
<comment type="catalytic activity">
    <reaction evidence="1">
        <text>D-ribose 5-phosphate + uracil = psi-UMP + H2O</text>
        <dbReference type="Rhea" id="RHEA:18337"/>
        <dbReference type="ChEBI" id="CHEBI:15377"/>
        <dbReference type="ChEBI" id="CHEBI:17568"/>
        <dbReference type="ChEBI" id="CHEBI:58380"/>
        <dbReference type="ChEBI" id="CHEBI:78346"/>
        <dbReference type="EC" id="4.2.1.70"/>
    </reaction>
</comment>
<comment type="cofactor">
    <cofactor evidence="1">
        <name>Mn(2+)</name>
        <dbReference type="ChEBI" id="CHEBI:29035"/>
    </cofactor>
    <text evidence="1">Binds 1 Mn(2+) ion per subunit.</text>
</comment>
<comment type="subunit">
    <text evidence="1">Homotrimer.</text>
</comment>
<comment type="similarity">
    <text evidence="1">Belongs to the pseudouridine-5'-phosphate glycosidase family.</text>
</comment>
<evidence type="ECO:0000255" key="1">
    <source>
        <dbReference type="HAMAP-Rule" id="MF_01876"/>
    </source>
</evidence>